<proteinExistence type="inferred from homology"/>
<feature type="chain" id="PRO_1000143785" description="Large ribosomal subunit protein bL21">
    <location>
        <begin position="1"/>
        <end position="102"/>
    </location>
</feature>
<gene>
    <name evidence="1" type="primary">rplU</name>
    <name type="ordered locus">DvMF_1380</name>
</gene>
<protein>
    <recommendedName>
        <fullName evidence="1">Large ribosomal subunit protein bL21</fullName>
    </recommendedName>
    <alternativeName>
        <fullName evidence="2">50S ribosomal protein L21</fullName>
    </alternativeName>
</protein>
<name>RL21_NITV9</name>
<accession>B8DRP1</accession>
<organism>
    <name type="scientific">Nitratidesulfovibrio vulgaris (strain DSM 19637 / Miyazaki F)</name>
    <name type="common">Desulfovibrio vulgaris</name>
    <dbReference type="NCBI Taxonomy" id="883"/>
    <lineage>
        <taxon>Bacteria</taxon>
        <taxon>Pseudomonadati</taxon>
        <taxon>Thermodesulfobacteriota</taxon>
        <taxon>Desulfovibrionia</taxon>
        <taxon>Desulfovibrionales</taxon>
        <taxon>Desulfovibrionaceae</taxon>
        <taxon>Nitratidesulfovibrio</taxon>
    </lineage>
</organism>
<dbReference type="EMBL" id="CP001197">
    <property type="protein sequence ID" value="ACL08328.1"/>
    <property type="molecule type" value="Genomic_DNA"/>
</dbReference>
<dbReference type="SMR" id="B8DRP1"/>
<dbReference type="STRING" id="883.DvMF_1380"/>
<dbReference type="KEGG" id="dvm:DvMF_1380"/>
<dbReference type="eggNOG" id="COG0261">
    <property type="taxonomic scope" value="Bacteria"/>
</dbReference>
<dbReference type="HOGENOM" id="CLU_061463_3_2_7"/>
<dbReference type="OrthoDB" id="9813334at2"/>
<dbReference type="GO" id="GO:0005737">
    <property type="term" value="C:cytoplasm"/>
    <property type="evidence" value="ECO:0007669"/>
    <property type="project" value="UniProtKB-ARBA"/>
</dbReference>
<dbReference type="GO" id="GO:1990904">
    <property type="term" value="C:ribonucleoprotein complex"/>
    <property type="evidence" value="ECO:0007669"/>
    <property type="project" value="UniProtKB-KW"/>
</dbReference>
<dbReference type="GO" id="GO:0005840">
    <property type="term" value="C:ribosome"/>
    <property type="evidence" value="ECO:0007669"/>
    <property type="project" value="UniProtKB-KW"/>
</dbReference>
<dbReference type="GO" id="GO:0019843">
    <property type="term" value="F:rRNA binding"/>
    <property type="evidence" value="ECO:0007669"/>
    <property type="project" value="UniProtKB-UniRule"/>
</dbReference>
<dbReference type="GO" id="GO:0003735">
    <property type="term" value="F:structural constituent of ribosome"/>
    <property type="evidence" value="ECO:0007669"/>
    <property type="project" value="InterPro"/>
</dbReference>
<dbReference type="GO" id="GO:0006412">
    <property type="term" value="P:translation"/>
    <property type="evidence" value="ECO:0007669"/>
    <property type="project" value="UniProtKB-UniRule"/>
</dbReference>
<dbReference type="HAMAP" id="MF_01363">
    <property type="entry name" value="Ribosomal_bL21"/>
    <property type="match status" value="1"/>
</dbReference>
<dbReference type="InterPro" id="IPR028909">
    <property type="entry name" value="bL21-like"/>
</dbReference>
<dbReference type="InterPro" id="IPR036164">
    <property type="entry name" value="bL21-like_sf"/>
</dbReference>
<dbReference type="InterPro" id="IPR001787">
    <property type="entry name" value="Ribosomal_bL21"/>
</dbReference>
<dbReference type="NCBIfam" id="TIGR00061">
    <property type="entry name" value="L21"/>
    <property type="match status" value="1"/>
</dbReference>
<dbReference type="PANTHER" id="PTHR21349">
    <property type="entry name" value="50S RIBOSOMAL PROTEIN L21"/>
    <property type="match status" value="1"/>
</dbReference>
<dbReference type="PANTHER" id="PTHR21349:SF0">
    <property type="entry name" value="LARGE RIBOSOMAL SUBUNIT PROTEIN BL21M"/>
    <property type="match status" value="1"/>
</dbReference>
<dbReference type="Pfam" id="PF00829">
    <property type="entry name" value="Ribosomal_L21p"/>
    <property type="match status" value="1"/>
</dbReference>
<dbReference type="SUPFAM" id="SSF141091">
    <property type="entry name" value="L21p-like"/>
    <property type="match status" value="1"/>
</dbReference>
<keyword id="KW-0687">Ribonucleoprotein</keyword>
<keyword id="KW-0689">Ribosomal protein</keyword>
<keyword id="KW-0694">RNA-binding</keyword>
<keyword id="KW-0699">rRNA-binding</keyword>
<evidence type="ECO:0000255" key="1">
    <source>
        <dbReference type="HAMAP-Rule" id="MF_01363"/>
    </source>
</evidence>
<evidence type="ECO:0000305" key="2"/>
<comment type="function">
    <text evidence="1">This protein binds to 23S rRNA in the presence of protein L20.</text>
</comment>
<comment type="subunit">
    <text evidence="1">Part of the 50S ribosomal subunit. Contacts protein L20.</text>
</comment>
<comment type="similarity">
    <text evidence="1">Belongs to the bacterial ribosomal protein bL21 family.</text>
</comment>
<sequence length="102" mass="11231">MYAIIETGGKQFRVEEGAKIFVEKLVAEAGSEIVIDKVLMLGGGAFSVGAPYVEGAKVTAEVVEHGRGEKLIVFKKWRRNDSRKKQGHRQDFTALKIKAIQA</sequence>
<reference key="1">
    <citation type="submission" date="2008-10" db="EMBL/GenBank/DDBJ databases">
        <title>Complete sequence of Desulfovibrio vulgaris str. 'Miyazaki F'.</title>
        <authorList>
            <person name="Lucas S."/>
            <person name="Copeland A."/>
            <person name="Lapidus A."/>
            <person name="Glavina del Rio T."/>
            <person name="Dalin E."/>
            <person name="Tice H."/>
            <person name="Bruce D."/>
            <person name="Goodwin L."/>
            <person name="Pitluck S."/>
            <person name="Sims D."/>
            <person name="Brettin T."/>
            <person name="Detter J.C."/>
            <person name="Han C."/>
            <person name="Larimer F."/>
            <person name="Land M."/>
            <person name="Hauser L."/>
            <person name="Kyrpides N."/>
            <person name="Mikhailova N."/>
            <person name="Hazen T.C."/>
            <person name="Richardson P."/>
        </authorList>
    </citation>
    <scope>NUCLEOTIDE SEQUENCE [LARGE SCALE GENOMIC DNA]</scope>
    <source>
        <strain>DSM 19637 / Miyazaki F</strain>
    </source>
</reference>